<reference key="1">
    <citation type="journal article" date="2002" name="Nucleic Acids Res.">
        <title>Genome sequence of Shigella flexneri 2a: insights into pathogenicity through comparison with genomes of Escherichia coli K12 and O157.</title>
        <authorList>
            <person name="Jin Q."/>
            <person name="Yuan Z."/>
            <person name="Xu J."/>
            <person name="Wang Y."/>
            <person name="Shen Y."/>
            <person name="Lu W."/>
            <person name="Wang J."/>
            <person name="Liu H."/>
            <person name="Yang J."/>
            <person name="Yang F."/>
            <person name="Zhang X."/>
            <person name="Zhang J."/>
            <person name="Yang G."/>
            <person name="Wu H."/>
            <person name="Qu D."/>
            <person name="Dong J."/>
            <person name="Sun L."/>
            <person name="Xue Y."/>
            <person name="Zhao A."/>
            <person name="Gao Y."/>
            <person name="Zhu J."/>
            <person name="Kan B."/>
            <person name="Ding K."/>
            <person name="Chen S."/>
            <person name="Cheng H."/>
            <person name="Yao Z."/>
            <person name="He B."/>
            <person name="Chen R."/>
            <person name="Ma D."/>
            <person name="Qiang B."/>
            <person name="Wen Y."/>
            <person name="Hou Y."/>
            <person name="Yu J."/>
        </authorList>
    </citation>
    <scope>NUCLEOTIDE SEQUENCE [LARGE SCALE GENOMIC DNA]</scope>
    <source>
        <strain>301 / Serotype 2a</strain>
    </source>
</reference>
<reference key="2">
    <citation type="journal article" date="2003" name="Infect. Immun.">
        <title>Complete genome sequence and comparative genomics of Shigella flexneri serotype 2a strain 2457T.</title>
        <authorList>
            <person name="Wei J."/>
            <person name="Goldberg M.B."/>
            <person name="Burland V."/>
            <person name="Venkatesan M.M."/>
            <person name="Deng W."/>
            <person name="Fournier G."/>
            <person name="Mayhew G.F."/>
            <person name="Plunkett G. III"/>
            <person name="Rose D.J."/>
            <person name="Darling A."/>
            <person name="Mau B."/>
            <person name="Perna N.T."/>
            <person name="Payne S.M."/>
            <person name="Runyen-Janecky L.J."/>
            <person name="Zhou S."/>
            <person name="Schwartz D.C."/>
            <person name="Blattner F.R."/>
        </authorList>
    </citation>
    <scope>NUCLEOTIDE SEQUENCE [LARGE SCALE GENOMIC DNA]</scope>
    <source>
        <strain>ATCC 700930 / 2457T / Serotype 2a</strain>
    </source>
</reference>
<name>YBJL_SHIFL</name>
<keyword id="KW-1003">Cell membrane</keyword>
<keyword id="KW-0472">Membrane</keyword>
<keyword id="KW-1185">Reference proteome</keyword>
<keyword id="KW-0677">Repeat</keyword>
<keyword id="KW-0812">Transmembrane</keyword>
<keyword id="KW-1133">Transmembrane helix</keyword>
<keyword id="KW-0813">Transport</keyword>
<dbReference type="EMBL" id="AE005674">
    <property type="protein sequence ID" value="AAN42433.1"/>
    <property type="molecule type" value="Genomic_DNA"/>
</dbReference>
<dbReference type="EMBL" id="AE014073">
    <property type="protein sequence ID" value="AAP16306.1"/>
    <property type="molecule type" value="Genomic_DNA"/>
</dbReference>
<dbReference type="RefSeq" id="NP_706726.1">
    <property type="nucleotide sequence ID" value="NC_004337.2"/>
</dbReference>
<dbReference type="RefSeq" id="WP_001024865.1">
    <property type="nucleotide sequence ID" value="NZ_WPGW01000056.1"/>
</dbReference>
<dbReference type="SMR" id="Q83S20"/>
<dbReference type="STRING" id="198214.SF0800"/>
<dbReference type="PaxDb" id="198214-SF0800"/>
<dbReference type="GeneID" id="1023767"/>
<dbReference type="KEGG" id="sfl:SF0800"/>
<dbReference type="KEGG" id="sfx:S0843"/>
<dbReference type="PATRIC" id="fig|198214.7.peg.928"/>
<dbReference type="HOGENOM" id="CLU_035023_2_2_6"/>
<dbReference type="Proteomes" id="UP000001006">
    <property type="component" value="Chromosome"/>
</dbReference>
<dbReference type="Proteomes" id="UP000002673">
    <property type="component" value="Chromosome"/>
</dbReference>
<dbReference type="GO" id="GO:0005886">
    <property type="term" value="C:plasma membrane"/>
    <property type="evidence" value="ECO:0007669"/>
    <property type="project" value="UniProtKB-SubCell"/>
</dbReference>
<dbReference type="GO" id="GO:0008324">
    <property type="term" value="F:monoatomic cation transmembrane transporter activity"/>
    <property type="evidence" value="ECO:0007669"/>
    <property type="project" value="InterPro"/>
</dbReference>
<dbReference type="GO" id="GO:0006813">
    <property type="term" value="P:potassium ion transport"/>
    <property type="evidence" value="ECO:0007669"/>
    <property type="project" value="InterPro"/>
</dbReference>
<dbReference type="FunFam" id="3.30.70.1450:FF:000003">
    <property type="entry name" value="Putative transport protein YbjL"/>
    <property type="match status" value="1"/>
</dbReference>
<dbReference type="Gene3D" id="3.30.70.1450">
    <property type="entry name" value="Regulator of K+ conductance, C-terminal domain"/>
    <property type="match status" value="2"/>
</dbReference>
<dbReference type="HAMAP" id="MF_01015">
    <property type="entry name" value="YbjL"/>
    <property type="match status" value="1"/>
</dbReference>
<dbReference type="InterPro" id="IPR050144">
    <property type="entry name" value="AAE_transporter"/>
</dbReference>
<dbReference type="InterPro" id="IPR006037">
    <property type="entry name" value="RCK_C"/>
</dbReference>
<dbReference type="InterPro" id="IPR036721">
    <property type="entry name" value="RCK_C_sf"/>
</dbReference>
<dbReference type="InterPro" id="IPR023017">
    <property type="entry name" value="Transp_YbjL_put"/>
</dbReference>
<dbReference type="InterPro" id="IPR006512">
    <property type="entry name" value="YidE_YbjL"/>
</dbReference>
<dbReference type="NCBIfam" id="NF003440">
    <property type="entry name" value="PRK04972.1"/>
    <property type="match status" value="1"/>
</dbReference>
<dbReference type="NCBIfam" id="TIGR01625">
    <property type="entry name" value="YidE_YbjL_dupl"/>
    <property type="match status" value="2"/>
</dbReference>
<dbReference type="PANTHER" id="PTHR30445">
    <property type="entry name" value="K(+)_H(+) ANTIPORTER SUBUNIT KHTT"/>
    <property type="match status" value="1"/>
</dbReference>
<dbReference type="PANTHER" id="PTHR30445:SF10">
    <property type="entry name" value="TRANSPORT PROTEIN YBJL-RELATED"/>
    <property type="match status" value="1"/>
</dbReference>
<dbReference type="Pfam" id="PF06826">
    <property type="entry name" value="Asp-Al_Ex"/>
    <property type="match status" value="2"/>
</dbReference>
<dbReference type="Pfam" id="PF02080">
    <property type="entry name" value="TrkA_C"/>
    <property type="match status" value="2"/>
</dbReference>
<dbReference type="SUPFAM" id="SSF116726">
    <property type="entry name" value="TrkA C-terminal domain-like"/>
    <property type="match status" value="2"/>
</dbReference>
<dbReference type="PROSITE" id="PS51202">
    <property type="entry name" value="RCK_C"/>
    <property type="match status" value="2"/>
</dbReference>
<sequence length="561" mass="60332">MNINVAELLNGNYILLLFVVLALGLCLGKLRLGSIQLGNSIGVLVVSLLLGQQHFSINTDALNLGFMLFIFCVGVEAGPNFFSIFFRDGKNYLMLALVMVGSALVIALGLGKLFGWDIGLTAGMLAGSMTSTPVLVGAGDTLHHSGMESRQLSLALDNLSLGYALTYLIGLVSLIVGARYLPKLQHQDLQTSAQQIARERGLDTDANRKVYLPVIRAYRVGPELVAWTDGKNLRELGIYRQTGCYIERIRRNGILANPDGDAVLQMGDEIALVGYPDAHARLDPSFRNGKEVFDRDLLDMRIVTEEVVVKNHNAVGKRLAQLKLTDHGCFLNRVIRSQIEMPIDDNVVLNKGDVLQVSGDARRVKTIADRIGFISIHSQVTDLLAFCAFFVIGLMIGMITFQFSTFSFGMGNAAGLLFAGIMLGFMRANHPTFGYIPQGALSMVKEFGLMVFMAGVGLSAGSGINNGLGAIGGQMLIAGLIVSLVPVVICFLFGAYVLRMNRALLFGAMMGARTCAPAMEIISDTARSNIPALGYAGTYAIANVLLTLAGTIIVMVWPGLG</sequence>
<proteinExistence type="inferred from homology"/>
<gene>
    <name evidence="1" type="primary">ybjL</name>
    <name type="ordered locus">SF0800</name>
    <name type="ordered locus">S0843</name>
</gene>
<comment type="subcellular location">
    <subcellularLocation>
        <location evidence="1">Cell membrane</location>
        <topology evidence="1">Multi-pass membrane protein</topology>
    </subcellularLocation>
</comment>
<comment type="similarity">
    <text evidence="1">Belongs to the AAE transporter (TC 2.A.81) family. YbjL subfamily.</text>
</comment>
<accession>Q83S20</accession>
<accession>Q7C2D9</accession>
<evidence type="ECO:0000255" key="1">
    <source>
        <dbReference type="HAMAP-Rule" id="MF_01015"/>
    </source>
</evidence>
<protein>
    <recommendedName>
        <fullName evidence="1">Putative transport protein YbjL</fullName>
    </recommendedName>
</protein>
<feature type="chain" id="PRO_0000208790" description="Putative transport protein YbjL">
    <location>
        <begin position="1"/>
        <end position="561"/>
    </location>
</feature>
<feature type="transmembrane region" description="Helical" evidence="1">
    <location>
        <begin position="8"/>
        <end position="28"/>
    </location>
</feature>
<feature type="transmembrane region" description="Helical" evidence="1">
    <location>
        <begin position="32"/>
        <end position="52"/>
    </location>
</feature>
<feature type="transmembrane region" description="Helical" evidence="1">
    <location>
        <begin position="66"/>
        <end position="86"/>
    </location>
</feature>
<feature type="transmembrane region" description="Helical" evidence="1">
    <location>
        <begin position="94"/>
        <end position="114"/>
    </location>
</feature>
<feature type="transmembrane region" description="Helical" evidence="1">
    <location>
        <begin position="158"/>
        <end position="178"/>
    </location>
</feature>
<feature type="transmembrane region" description="Helical" evidence="1">
    <location>
        <begin position="383"/>
        <end position="403"/>
    </location>
</feature>
<feature type="transmembrane region" description="Helical" evidence="1">
    <location>
        <begin position="406"/>
        <end position="426"/>
    </location>
</feature>
<feature type="transmembrane region" description="Helical" evidence="1">
    <location>
        <begin position="451"/>
        <end position="471"/>
    </location>
</feature>
<feature type="transmembrane region" description="Helical" evidence="1">
    <location>
        <begin position="475"/>
        <end position="495"/>
    </location>
</feature>
<feature type="transmembrane region" description="Helical" evidence="1">
    <location>
        <begin position="540"/>
        <end position="560"/>
    </location>
</feature>
<feature type="domain" description="RCK C-terminal 1" evidence="1">
    <location>
        <begin position="200"/>
        <end position="288"/>
    </location>
</feature>
<feature type="domain" description="RCK C-terminal 2" evidence="1">
    <location>
        <begin position="292"/>
        <end position="373"/>
    </location>
</feature>
<organism>
    <name type="scientific">Shigella flexneri</name>
    <dbReference type="NCBI Taxonomy" id="623"/>
    <lineage>
        <taxon>Bacteria</taxon>
        <taxon>Pseudomonadati</taxon>
        <taxon>Pseudomonadota</taxon>
        <taxon>Gammaproteobacteria</taxon>
        <taxon>Enterobacterales</taxon>
        <taxon>Enterobacteriaceae</taxon>
        <taxon>Shigella</taxon>
    </lineage>
</organism>